<sequence length="446" mass="49773">MALIIQKFGGTSVANVERIKKLVPIIKAEIAKNNQVIVVVSAMAGVTNQLVTLCNEVSSLNKRSQFAEYDVALSSGEIVTASLLALALQEEEIKAQSLLAWQLPIRTNNNYSKALVEFITTDLLEKYLQLKIIPIIAGFQGINKSNRVTTLGRGGSDTTAALIAAAMKADRCDIYTDVDGIFTADPRIIPNAKRIKEIDFLEMLELASSGAKVLHPRAVELVMRYKIDMRVLSTFSPNTEGTLITSKDTIPLVKSTYMEESALNTKHSTKIDIPEDASGSTYKLPIELALQNRYNMENCVVRCITSNKNLLKVSVNSISLSFLQVANMITYNNNCIEFMQEIENNIEYNFITNLTDKNNLQTLLTKCKNNKQIQDFTFDTEIATISLIGYGIKNDCKLLTMILSQLTQDNINVHMMQLSEVKITLLINDKDVEKTIFNLYNLFKIS</sequence>
<comment type="catalytic activity">
    <reaction>
        <text>L-aspartate + ATP = 4-phospho-L-aspartate + ADP</text>
        <dbReference type="Rhea" id="RHEA:23776"/>
        <dbReference type="ChEBI" id="CHEBI:29991"/>
        <dbReference type="ChEBI" id="CHEBI:30616"/>
        <dbReference type="ChEBI" id="CHEBI:57535"/>
        <dbReference type="ChEBI" id="CHEBI:456216"/>
        <dbReference type="EC" id="2.7.2.4"/>
    </reaction>
</comment>
<comment type="pathway">
    <text>Amino-acid biosynthesis; L-lysine biosynthesis via DAP pathway; (S)-tetrahydrodipicolinate from L-aspartate: step 1/4.</text>
</comment>
<comment type="pathway">
    <text>Amino-acid biosynthesis; L-methionine biosynthesis via de novo pathway; L-homoserine from L-aspartate: step 1/3.</text>
</comment>
<comment type="pathway">
    <text>Amino-acid biosynthesis; L-threonine biosynthesis; L-threonine from L-aspartate: step 1/5.</text>
</comment>
<comment type="similarity">
    <text evidence="1">Belongs to the aspartokinase family.</text>
</comment>
<gene>
    <name type="primary">lysC</name>
    <name type="ordered locus">RP753</name>
</gene>
<keyword id="KW-0028">Amino-acid biosynthesis</keyword>
<keyword id="KW-0067">ATP-binding</keyword>
<keyword id="KW-0220">Diaminopimelate biosynthesis</keyword>
<keyword id="KW-0418">Kinase</keyword>
<keyword id="KW-0457">Lysine biosynthesis</keyword>
<keyword id="KW-0547">Nucleotide-binding</keyword>
<keyword id="KW-1185">Reference proteome</keyword>
<keyword id="KW-0808">Transferase</keyword>
<protein>
    <recommendedName>
        <fullName>Aspartokinase</fullName>
        <ecNumber>2.7.2.4</ecNumber>
    </recommendedName>
    <alternativeName>
        <fullName>Aspartate kinase</fullName>
    </alternativeName>
</protein>
<reference key="1">
    <citation type="journal article" date="1998" name="Nature">
        <title>The genome sequence of Rickettsia prowazekii and the origin of mitochondria.</title>
        <authorList>
            <person name="Andersson S.G.E."/>
            <person name="Zomorodipour A."/>
            <person name="Andersson J.O."/>
            <person name="Sicheritz-Ponten T."/>
            <person name="Alsmark U.C.M."/>
            <person name="Podowski R.M."/>
            <person name="Naeslund A.K."/>
            <person name="Eriksson A.-S."/>
            <person name="Winkler H.H."/>
            <person name="Kurland C.G."/>
        </authorList>
    </citation>
    <scope>NUCLEOTIDE SEQUENCE [LARGE SCALE GENOMIC DNA]</scope>
    <source>
        <strain>Madrid E</strain>
    </source>
</reference>
<reference key="2">
    <citation type="journal article" date="2000" name="Science">
        <title>Selfish DNA in protein-coding genes of Rickettsia.</title>
        <authorList>
            <person name="Ogata H."/>
            <person name="Audic S."/>
            <person name="Barbe V."/>
            <person name="Artiguenave F."/>
            <person name="Fournier P.-E."/>
            <person name="Raoult D."/>
            <person name="Claverie J.-M."/>
        </authorList>
    </citation>
    <scope>DOMAIN RPE1</scope>
</reference>
<accession>Q9ZCI7</accession>
<name>AK_RICPR</name>
<proteinExistence type="inferred from homology"/>
<organism>
    <name type="scientific">Rickettsia prowazekii (strain Madrid E)</name>
    <dbReference type="NCBI Taxonomy" id="272947"/>
    <lineage>
        <taxon>Bacteria</taxon>
        <taxon>Pseudomonadati</taxon>
        <taxon>Pseudomonadota</taxon>
        <taxon>Alphaproteobacteria</taxon>
        <taxon>Rickettsiales</taxon>
        <taxon>Rickettsiaceae</taxon>
        <taxon>Rickettsieae</taxon>
        <taxon>Rickettsia</taxon>
        <taxon>typhus group</taxon>
    </lineage>
</organism>
<dbReference type="EC" id="2.7.2.4"/>
<dbReference type="EMBL" id="AJ235273">
    <property type="protein sequence ID" value="CAA15181.1"/>
    <property type="molecule type" value="Genomic_DNA"/>
</dbReference>
<dbReference type="PIR" id="E71635">
    <property type="entry name" value="E71635"/>
</dbReference>
<dbReference type="RefSeq" id="NP_221105.1">
    <property type="nucleotide sequence ID" value="NC_000963.1"/>
</dbReference>
<dbReference type="RefSeq" id="WP_004596996.1">
    <property type="nucleotide sequence ID" value="NC_000963.1"/>
</dbReference>
<dbReference type="SMR" id="Q9ZCI7"/>
<dbReference type="STRING" id="272947.gene:17555823"/>
<dbReference type="EnsemblBacteria" id="CAA15181">
    <property type="protein sequence ID" value="CAA15181"/>
    <property type="gene ID" value="CAA15181"/>
</dbReference>
<dbReference type="KEGG" id="rpr:RP753"/>
<dbReference type="PATRIC" id="fig|272947.5.peg.787"/>
<dbReference type="eggNOG" id="COG0527">
    <property type="taxonomic scope" value="Bacteria"/>
</dbReference>
<dbReference type="HOGENOM" id="CLU_009116_3_2_5"/>
<dbReference type="OrthoDB" id="9799110at2"/>
<dbReference type="UniPathway" id="UPA00034">
    <property type="reaction ID" value="UER00015"/>
</dbReference>
<dbReference type="UniPathway" id="UPA00050">
    <property type="reaction ID" value="UER00461"/>
</dbReference>
<dbReference type="UniPathway" id="UPA00051">
    <property type="reaction ID" value="UER00462"/>
</dbReference>
<dbReference type="Proteomes" id="UP000002480">
    <property type="component" value="Chromosome"/>
</dbReference>
<dbReference type="GO" id="GO:0005829">
    <property type="term" value="C:cytosol"/>
    <property type="evidence" value="ECO:0007669"/>
    <property type="project" value="TreeGrafter"/>
</dbReference>
<dbReference type="GO" id="GO:0004072">
    <property type="term" value="F:aspartate kinase activity"/>
    <property type="evidence" value="ECO:0007669"/>
    <property type="project" value="UniProtKB-EC"/>
</dbReference>
<dbReference type="GO" id="GO:0005524">
    <property type="term" value="F:ATP binding"/>
    <property type="evidence" value="ECO:0007669"/>
    <property type="project" value="UniProtKB-KW"/>
</dbReference>
<dbReference type="GO" id="GO:0019877">
    <property type="term" value="P:diaminopimelate biosynthetic process"/>
    <property type="evidence" value="ECO:0007669"/>
    <property type="project" value="UniProtKB-KW"/>
</dbReference>
<dbReference type="GO" id="GO:0009090">
    <property type="term" value="P:homoserine biosynthetic process"/>
    <property type="evidence" value="ECO:0007669"/>
    <property type="project" value="TreeGrafter"/>
</dbReference>
<dbReference type="GO" id="GO:0009089">
    <property type="term" value="P:lysine biosynthetic process via diaminopimelate"/>
    <property type="evidence" value="ECO:0007669"/>
    <property type="project" value="UniProtKB-UniPathway"/>
</dbReference>
<dbReference type="GO" id="GO:0009088">
    <property type="term" value="P:threonine biosynthetic process"/>
    <property type="evidence" value="ECO:0007669"/>
    <property type="project" value="UniProtKB-UniPathway"/>
</dbReference>
<dbReference type="CDD" id="cd04261">
    <property type="entry name" value="AAK_AKii-LysC-BS"/>
    <property type="match status" value="1"/>
</dbReference>
<dbReference type="FunFam" id="3.40.1160.10:FF:000002">
    <property type="entry name" value="Aspartokinase"/>
    <property type="match status" value="1"/>
</dbReference>
<dbReference type="Gene3D" id="3.40.1160.10">
    <property type="entry name" value="Acetylglutamate kinase-like"/>
    <property type="match status" value="1"/>
</dbReference>
<dbReference type="Gene3D" id="3.30.2130.10">
    <property type="entry name" value="VC0802-like"/>
    <property type="match status" value="1"/>
</dbReference>
<dbReference type="InterPro" id="IPR036393">
    <property type="entry name" value="AceGlu_kinase-like_sf"/>
</dbReference>
<dbReference type="InterPro" id="IPR045865">
    <property type="entry name" value="ACT-like_dom_sf"/>
</dbReference>
<dbReference type="InterPro" id="IPR054352">
    <property type="entry name" value="ACT_Aspartokinase"/>
</dbReference>
<dbReference type="InterPro" id="IPR041740">
    <property type="entry name" value="AKii-LysC-BS"/>
</dbReference>
<dbReference type="InterPro" id="IPR001048">
    <property type="entry name" value="Asp/Glu/Uridylate_kinase"/>
</dbReference>
<dbReference type="InterPro" id="IPR005260">
    <property type="entry name" value="Asp_kin_monofn"/>
</dbReference>
<dbReference type="InterPro" id="IPR001341">
    <property type="entry name" value="Asp_kinase"/>
</dbReference>
<dbReference type="InterPro" id="IPR018042">
    <property type="entry name" value="Aspartate_kinase_CS"/>
</dbReference>
<dbReference type="InterPro" id="IPR001057">
    <property type="entry name" value="Glu/AcGlu_kinase"/>
</dbReference>
<dbReference type="NCBIfam" id="TIGR00657">
    <property type="entry name" value="asp_kinases"/>
    <property type="match status" value="1"/>
</dbReference>
<dbReference type="NCBIfam" id="NF005158">
    <property type="entry name" value="PRK06635.2-2"/>
    <property type="match status" value="1"/>
</dbReference>
<dbReference type="PANTHER" id="PTHR21499">
    <property type="entry name" value="ASPARTATE KINASE"/>
    <property type="match status" value="1"/>
</dbReference>
<dbReference type="PANTHER" id="PTHR21499:SF3">
    <property type="entry name" value="ASPARTOKINASE"/>
    <property type="match status" value="1"/>
</dbReference>
<dbReference type="Pfam" id="PF00696">
    <property type="entry name" value="AA_kinase"/>
    <property type="match status" value="1"/>
</dbReference>
<dbReference type="Pfam" id="PF22468">
    <property type="entry name" value="ACT_9"/>
    <property type="match status" value="1"/>
</dbReference>
<dbReference type="PIRSF" id="PIRSF000726">
    <property type="entry name" value="Asp_kin"/>
    <property type="match status" value="1"/>
</dbReference>
<dbReference type="PRINTS" id="PR00474">
    <property type="entry name" value="GLU5KINASE"/>
</dbReference>
<dbReference type="SUPFAM" id="SSF55021">
    <property type="entry name" value="ACT-like"/>
    <property type="match status" value="1"/>
</dbReference>
<dbReference type="SUPFAM" id="SSF53633">
    <property type="entry name" value="Carbamate kinase-like"/>
    <property type="match status" value="1"/>
</dbReference>
<dbReference type="PROSITE" id="PS00324">
    <property type="entry name" value="ASPARTOKINASE"/>
    <property type="match status" value="1"/>
</dbReference>
<feature type="chain" id="PRO_0000066680" description="Aspartokinase">
    <location>
        <begin position="1"/>
        <end position="446"/>
    </location>
</feature>
<feature type="domain" description="RPE1 insert">
    <location>
        <begin position="250"/>
        <end position="294"/>
    </location>
</feature>
<evidence type="ECO:0000305" key="1"/>